<proteinExistence type="evidence at protein level"/>
<comment type="function">
    <text evidence="1">Dehydrogenase involved in the biosynthesis of spermidine via the carboxyaminopropylagmatine (CAPA) pathway (PubMed:37878710). Catalyzes the reductive condensation of agmatine and L-aspartate-beta-semialdehyde (ASA) into CAPA (PubMed:37878710). Shows activity toward putrescine and 1,3-diaminopropane, but the catalytic efficiency is three to four orders of magnitude lower than that for agmatine (PubMed:37878710). Cannot use cadaverine or spermidine (PubMed:37878710).</text>
</comment>
<comment type="catalytic activity">
    <reaction evidence="1">
        <text>N(1)-[(S)-3-amino-3-carboxypropyl]agmatine + NADP(+) + H2O = L-aspartate 4-semialdehyde + agmatine + NADPH + H(+)</text>
        <dbReference type="Rhea" id="RHEA:78811"/>
        <dbReference type="ChEBI" id="CHEBI:15377"/>
        <dbReference type="ChEBI" id="CHEBI:15378"/>
        <dbReference type="ChEBI" id="CHEBI:57783"/>
        <dbReference type="ChEBI" id="CHEBI:58145"/>
        <dbReference type="ChEBI" id="CHEBI:58349"/>
        <dbReference type="ChEBI" id="CHEBI:229577"/>
        <dbReference type="ChEBI" id="CHEBI:537519"/>
        <dbReference type="EC" id="1.5.1.55"/>
    </reaction>
    <physiologicalReaction direction="right-to-left" evidence="1">
        <dbReference type="Rhea" id="RHEA:78813"/>
    </physiologicalReaction>
</comment>
<comment type="biophysicochemical properties">
    <kinetics>
        <KM evidence="1">0.01 mM for agmatine</KM>
        <KM evidence="1">6.34 mM for putrescine</KM>
        <KM evidence="1">2.67 mM for 1,3-diaminopropane</KM>
        <KM evidence="1">0.01 mM for NADPH</KM>
        <KM evidence="1">0.58 mM for NADH</KM>
        <text evidence="1">kcat is 2.57 sec(-1) with agmatine as substrate. kcat is 0.32 sec(-1) with putrescine as substrate. kcat is 0.07 sec(-1) with 1,3-diaminopropane as substrate. kcat is 2.43 sec(-1) with NADPH as substrate.</text>
    </kinetics>
</comment>
<comment type="pathway">
    <text evidence="1">Amine and polyamine biosynthesis; spermidine biosynthesis.</text>
</comment>
<comment type="disruption phenotype">
    <text evidence="1">Deletion of the gene leads to substantial accumulation of agmatine and lack of CAPA, aminopropylagmatine (APA) and spermidine (PubMed:37878710). However, the knockout mutant shows a remarkable decrease in putrescine concentration compared with the wild-type strain (PubMed:37878710).</text>
</comment>
<comment type="similarity">
    <text evidence="3">Belongs to the saccharopine dehydrogenase family.</text>
</comment>
<dbReference type="EC" id="1.5.1.55" evidence="1"/>
<dbReference type="EMBL" id="BA000022">
    <property type="protein sequence ID" value="BAA10265.1"/>
    <property type="molecule type" value="Genomic_DNA"/>
</dbReference>
<dbReference type="PIR" id="S74347">
    <property type="entry name" value="S74347"/>
</dbReference>
<dbReference type="SMR" id="Q55131"/>
<dbReference type="STRING" id="1148.gene:10499764"/>
<dbReference type="PaxDb" id="1148-1001125"/>
<dbReference type="EnsemblBacteria" id="BAA10265">
    <property type="protein sequence ID" value="BAA10265"/>
    <property type="gene ID" value="BAA10265"/>
</dbReference>
<dbReference type="KEGG" id="syn:slr0049"/>
<dbReference type="eggNOG" id="COG1748">
    <property type="taxonomic scope" value="Bacteria"/>
</dbReference>
<dbReference type="InParanoid" id="Q55131"/>
<dbReference type="PhylomeDB" id="Q55131"/>
<dbReference type="UniPathway" id="UPA00248"/>
<dbReference type="Proteomes" id="UP000001425">
    <property type="component" value="Chromosome"/>
</dbReference>
<dbReference type="GO" id="GO:0016491">
    <property type="term" value="F:oxidoreductase activity"/>
    <property type="evidence" value="ECO:0007669"/>
    <property type="project" value="UniProtKB-KW"/>
</dbReference>
<dbReference type="GO" id="GO:0008295">
    <property type="term" value="P:spermidine biosynthetic process"/>
    <property type="evidence" value="ECO:0007669"/>
    <property type="project" value="UniProtKB-KW"/>
</dbReference>
<dbReference type="Gene3D" id="3.30.360.10">
    <property type="entry name" value="Dihydrodipicolinate Reductase, domain 2"/>
    <property type="match status" value="1"/>
</dbReference>
<dbReference type="Gene3D" id="3.40.50.720">
    <property type="entry name" value="NAD(P)-binding Rossmann-like Domain"/>
    <property type="match status" value="1"/>
</dbReference>
<dbReference type="InterPro" id="IPR036291">
    <property type="entry name" value="NAD(P)-bd_dom_sf"/>
</dbReference>
<dbReference type="InterPro" id="IPR032095">
    <property type="entry name" value="Sacchrp_dh-like_C"/>
</dbReference>
<dbReference type="InterPro" id="IPR005097">
    <property type="entry name" value="Sacchrp_dh_NADP-bd"/>
</dbReference>
<dbReference type="PANTHER" id="PTHR43796">
    <property type="entry name" value="CARBOXYNORSPERMIDINE SYNTHASE"/>
    <property type="match status" value="1"/>
</dbReference>
<dbReference type="PANTHER" id="PTHR43796:SF2">
    <property type="entry name" value="CARBOXYNORSPERMIDINE SYNTHASE"/>
    <property type="match status" value="1"/>
</dbReference>
<dbReference type="Pfam" id="PF16653">
    <property type="entry name" value="Sacchrp_dh_C"/>
    <property type="match status" value="1"/>
</dbReference>
<dbReference type="Pfam" id="PF03435">
    <property type="entry name" value="Sacchrp_dh_NADP"/>
    <property type="match status" value="1"/>
</dbReference>
<dbReference type="SUPFAM" id="SSF51735">
    <property type="entry name" value="NAD(P)-binding Rossmann-fold domains"/>
    <property type="match status" value="1"/>
</dbReference>
<organism>
    <name type="scientific">Synechocystis sp. (strain ATCC 27184 / PCC 6803 / Kazusa)</name>
    <dbReference type="NCBI Taxonomy" id="1111708"/>
    <lineage>
        <taxon>Bacteria</taxon>
        <taxon>Bacillati</taxon>
        <taxon>Cyanobacteriota</taxon>
        <taxon>Cyanophyceae</taxon>
        <taxon>Synechococcales</taxon>
        <taxon>Merismopediaceae</taxon>
        <taxon>Synechocystis</taxon>
    </lineage>
</organism>
<feature type="chain" id="PRO_0000460609" description="Carboxyaminopropylagmatine dehydrogenase">
    <location>
        <begin position="1"/>
        <end position="398"/>
    </location>
</feature>
<feature type="mutagenesis site" description="3-fold decrease in catalytic efficiency." evidence="1">
    <original>N</original>
    <variation>A</variation>
    <location>
        <position position="104"/>
    </location>
</feature>
<feature type="mutagenesis site" description="210-fold decrease in catalytic efficiency." evidence="1">
    <original>N</original>
    <variation>Q</variation>
    <location>
        <position position="104"/>
    </location>
</feature>
<feature type="mutagenesis site" description="Strong decrease in activity." evidence="1">
    <original>E</original>
    <variation>A</variation>
    <location>
        <position position="106"/>
    </location>
</feature>
<feature type="mutagenesis site" description="2-fold decrease in catalytic efficiency." evidence="1">
    <original>F</original>
    <variation>A</variation>
    <location>
        <position position="113"/>
    </location>
</feature>
<feature type="mutagenesis site" description="10-fold decrease in catalytic efficiency." evidence="1">
    <original>F</original>
    <variation>W</variation>
    <location>
        <position position="113"/>
    </location>
</feature>
<feature type="mutagenesis site" description="Retains 50% of activity." evidence="1">
    <original>D</original>
    <variation>A</variation>
    <location>
        <position position="139"/>
    </location>
</feature>
<feature type="mutagenesis site" description="Loss of activity." evidence="1">
    <original>D</original>
    <variation>A</variation>
    <location>
        <position position="165"/>
    </location>
</feature>
<feature type="mutagenesis site" description="Strong decrease in activity." evidence="1">
    <original>E</original>
    <variation>A</variation>
    <location>
        <position position="187"/>
    </location>
</feature>
<feature type="mutagenesis site" description="Loss of activity." evidence="1">
    <original>H</original>
    <variation>A</variation>
    <location>
        <position position="227"/>
    </location>
</feature>
<feature type="mutagenesis site" description="Loss of activity." evidence="1">
    <original>E</original>
    <variation>A</variation>
    <location>
        <position position="228"/>
    </location>
</feature>
<feature type="mutagenesis site" description="Retains 40% of activity." evidence="1">
    <original>T</original>
    <variation>A</variation>
    <location>
        <position position="342"/>
    </location>
</feature>
<feature type="mutagenesis site" description="Strong decrease in activity." evidence="1">
    <original>T</original>
    <variation>A</variation>
    <location>
        <position position="343"/>
    </location>
</feature>
<keyword id="KW-0521">NADP</keyword>
<keyword id="KW-0560">Oxidoreductase</keyword>
<keyword id="KW-1185">Reference proteome</keyword>
<keyword id="KW-0745">Spermidine biosynthesis</keyword>
<name>CAPDH_SYNY3</name>
<accession>Q55131</accession>
<gene>
    <name evidence="4" type="ordered locus">slr0049</name>
</gene>
<evidence type="ECO:0000269" key="1">
    <source>
    </source>
</evidence>
<evidence type="ECO:0000303" key="2">
    <source>
    </source>
</evidence>
<evidence type="ECO:0000305" key="3"/>
<evidence type="ECO:0000312" key="4">
    <source>
        <dbReference type="EMBL" id="BAA10265.1"/>
    </source>
</evidence>
<reference key="1">
    <citation type="journal article" date="1996" name="DNA Res.">
        <title>Sequence analysis of the genome of the unicellular cyanobacterium Synechocystis sp. strain PCC6803. II. Sequence determination of the entire genome and assignment of potential protein-coding regions.</title>
        <authorList>
            <person name="Kaneko T."/>
            <person name="Sato S."/>
            <person name="Kotani H."/>
            <person name="Tanaka A."/>
            <person name="Asamizu E."/>
            <person name="Nakamura Y."/>
            <person name="Miyajima N."/>
            <person name="Hirosawa M."/>
            <person name="Sugiura M."/>
            <person name="Sasamoto S."/>
            <person name="Kimura T."/>
            <person name="Hosouchi T."/>
            <person name="Matsuno A."/>
            <person name="Muraki A."/>
            <person name="Nakazaki N."/>
            <person name="Naruo K."/>
            <person name="Okumura S."/>
            <person name="Shimpo S."/>
            <person name="Takeuchi C."/>
            <person name="Wada T."/>
            <person name="Watanabe A."/>
            <person name="Yamada M."/>
            <person name="Yasuda M."/>
            <person name="Tabata S."/>
        </authorList>
    </citation>
    <scope>NUCLEOTIDE SEQUENCE [LARGE SCALE GENOMIC DNA]</scope>
    <source>
        <strain>ATCC 27184 / PCC 6803 / Kazusa</strain>
    </source>
</reference>
<reference key="2">
    <citation type="journal article" date="2023" name="Sci. Adv.">
        <title>A bacterial spermidine biosynthetic pathway via carboxyaminopropylagmatine.</title>
        <authorList>
            <person name="Xi H."/>
            <person name="Nie X."/>
            <person name="Gao F."/>
            <person name="Liang X."/>
            <person name="Li H."/>
            <person name="Zhou H."/>
            <person name="Cai Y."/>
            <person name="Yang C."/>
        </authorList>
    </citation>
    <scope>FUNCTION</scope>
    <scope>CATALYTIC ACTIVITY</scope>
    <scope>BIOPHYSICOCHEMICAL PROPERTIES</scope>
    <scope>PATHWAY</scope>
    <scope>DISRUPTION PHENOTYPE</scope>
    <scope>MUTAGENESIS OF ASN-104; GLU-106; PHE-113; ASP-139; ASP-165; GLU-187; HIS-227; GLU-228; THR-342 AND THR-343</scope>
    <source>
        <strain>ATCC 27184 / PCC 6803 / Kazusa</strain>
    </source>
</reference>
<sequence length="398" mass="44058">MAKVMIVGAGGVGSVVAHKCAALEDFTDILLASRTVAKCDQIAAHIGSPKVKTAALDAFQVSDTVKLLQDFGADLLINVALPYQDLVLMDACLEAGVDYLDTANYEPPDVAKFEYSWQWAYQDKFKDAGLMALLGCGFDPGVTGVFTAYALKHHFDEIHYLDIVDCNAGNHGQAFATNFNPEINIREITQKGRYHEDGVWQEIDPLSVHRDINYPHIGDRPSYLLYHEELESLVKNIPTLKRARFWMTFSEAYINHLRVLEAVGMTRIDEVEYQGQKIVPLQFLKAVLPEPASLAENYSGQTSIGCYIKGVKDGQAKTYYIYNNCDHAVCFAEVGSQAISYTTGVPAALGGLMMVQGKWKQAGVFNVEEMDPDPFLAKLGEMGLPWHEVVNGPFPFDD</sequence>
<protein>
    <recommendedName>
        <fullName evidence="2">Carboxyaminopropylagmatine dehydrogenase</fullName>
        <shortName evidence="2">CAPA dehydrogenase</shortName>
        <shortName evidence="2">CAPADH</shortName>
        <ecNumber evidence="1">1.5.1.55</ecNumber>
    </recommendedName>
</protein>